<comment type="function">
    <text evidence="1">Necessary for the introduction of cis unsaturation into fatty acids. Catalyzes the dehydration of (3R)-3-hydroxydecanoyl-ACP to E-(2)-decenoyl-ACP and then its isomerization to Z-(3)-decenoyl-ACP. Can catalyze the dehydratase reaction for beta-hydroxyacyl-ACPs with saturated chain lengths up to 16:0, being most active on intermediate chain length.</text>
</comment>
<comment type="catalytic activity">
    <reaction evidence="1">
        <text>a (3R)-hydroxyacyl-[ACP] = a (2E)-enoyl-[ACP] + H2O</text>
        <dbReference type="Rhea" id="RHEA:13097"/>
        <dbReference type="Rhea" id="RHEA-COMP:9925"/>
        <dbReference type="Rhea" id="RHEA-COMP:9945"/>
        <dbReference type="ChEBI" id="CHEBI:15377"/>
        <dbReference type="ChEBI" id="CHEBI:78784"/>
        <dbReference type="ChEBI" id="CHEBI:78827"/>
        <dbReference type="EC" id="4.2.1.59"/>
    </reaction>
</comment>
<comment type="catalytic activity">
    <reaction evidence="1">
        <text>(3R)-hydroxydecanoyl-[ACP] = (2E)-decenoyl-[ACP] + H2O</text>
        <dbReference type="Rhea" id="RHEA:41860"/>
        <dbReference type="Rhea" id="RHEA-COMP:9638"/>
        <dbReference type="Rhea" id="RHEA-COMP:9639"/>
        <dbReference type="ChEBI" id="CHEBI:15377"/>
        <dbReference type="ChEBI" id="CHEBI:78466"/>
        <dbReference type="ChEBI" id="CHEBI:78467"/>
    </reaction>
</comment>
<comment type="catalytic activity">
    <reaction evidence="1">
        <text>(2E)-decenoyl-[ACP] = (3Z)-decenoyl-[ACP]</text>
        <dbReference type="Rhea" id="RHEA:23568"/>
        <dbReference type="Rhea" id="RHEA-COMP:9639"/>
        <dbReference type="Rhea" id="RHEA-COMP:9927"/>
        <dbReference type="ChEBI" id="CHEBI:78467"/>
        <dbReference type="ChEBI" id="CHEBI:78798"/>
        <dbReference type="EC" id="5.3.3.14"/>
    </reaction>
</comment>
<comment type="pathway">
    <text evidence="1">Lipid metabolism; fatty acid biosynthesis.</text>
</comment>
<comment type="subunit">
    <text evidence="1">Homodimer.</text>
</comment>
<comment type="subcellular location">
    <subcellularLocation>
        <location evidence="1">Cytoplasm</location>
    </subcellularLocation>
</comment>
<comment type="similarity">
    <text evidence="1">Belongs to the thioester dehydratase family. FabA subfamily.</text>
</comment>
<dbReference type="EC" id="4.2.1.59" evidence="1"/>
<dbReference type="EC" id="5.3.3.14" evidence="1"/>
<dbReference type="EMBL" id="CP000911">
    <property type="protein sequence ID" value="ABY39020.1"/>
    <property type="molecule type" value="Genomic_DNA"/>
</dbReference>
<dbReference type="RefSeq" id="WP_002968051.1">
    <property type="nucleotide sequence ID" value="NC_010169.1"/>
</dbReference>
<dbReference type="SMR" id="B0CK19"/>
<dbReference type="GeneID" id="97534574"/>
<dbReference type="KEGG" id="bmt:BSUIS_A2010"/>
<dbReference type="HOGENOM" id="CLU_097925_0_0_5"/>
<dbReference type="UniPathway" id="UPA00094"/>
<dbReference type="Proteomes" id="UP000008545">
    <property type="component" value="Chromosome I"/>
</dbReference>
<dbReference type="GO" id="GO:0005737">
    <property type="term" value="C:cytoplasm"/>
    <property type="evidence" value="ECO:0007669"/>
    <property type="project" value="UniProtKB-SubCell"/>
</dbReference>
<dbReference type="GO" id="GO:0019171">
    <property type="term" value="F:(3R)-hydroxyacyl-[acyl-carrier-protein] dehydratase activity"/>
    <property type="evidence" value="ECO:0007669"/>
    <property type="project" value="UniProtKB-UniRule"/>
</dbReference>
<dbReference type="GO" id="GO:0034017">
    <property type="term" value="F:trans-2-decenoyl-acyl-carrier-protein isomerase activity"/>
    <property type="evidence" value="ECO:0007669"/>
    <property type="project" value="UniProtKB-UniRule"/>
</dbReference>
<dbReference type="GO" id="GO:0006636">
    <property type="term" value="P:unsaturated fatty acid biosynthetic process"/>
    <property type="evidence" value="ECO:0007669"/>
    <property type="project" value="UniProtKB-UniRule"/>
</dbReference>
<dbReference type="CDD" id="cd01287">
    <property type="entry name" value="FabA"/>
    <property type="match status" value="1"/>
</dbReference>
<dbReference type="Gene3D" id="3.10.129.10">
    <property type="entry name" value="Hotdog Thioesterase"/>
    <property type="match status" value="1"/>
</dbReference>
<dbReference type="HAMAP" id="MF_00405">
    <property type="entry name" value="FabA"/>
    <property type="match status" value="1"/>
</dbReference>
<dbReference type="InterPro" id="IPR010083">
    <property type="entry name" value="FabA"/>
</dbReference>
<dbReference type="InterPro" id="IPR013114">
    <property type="entry name" value="FabA_FabZ"/>
</dbReference>
<dbReference type="InterPro" id="IPR029069">
    <property type="entry name" value="HotDog_dom_sf"/>
</dbReference>
<dbReference type="NCBIfam" id="TIGR01749">
    <property type="entry name" value="fabA"/>
    <property type="match status" value="1"/>
</dbReference>
<dbReference type="NCBIfam" id="NF003509">
    <property type="entry name" value="PRK05174.1"/>
    <property type="match status" value="1"/>
</dbReference>
<dbReference type="PANTHER" id="PTHR30272">
    <property type="entry name" value="3-HYDROXYACYL-[ACYL-CARRIER-PROTEIN] DEHYDRATASE"/>
    <property type="match status" value="1"/>
</dbReference>
<dbReference type="PANTHER" id="PTHR30272:SF8">
    <property type="entry name" value="3-HYDROXYDECANOYL-[ACYL-CARRIER-PROTEIN] DEHYDRATASE"/>
    <property type="match status" value="1"/>
</dbReference>
<dbReference type="Pfam" id="PF07977">
    <property type="entry name" value="FabA"/>
    <property type="match status" value="1"/>
</dbReference>
<dbReference type="SUPFAM" id="SSF54637">
    <property type="entry name" value="Thioesterase/thiol ester dehydrase-isomerase"/>
    <property type="match status" value="1"/>
</dbReference>
<reference key="1">
    <citation type="submission" date="2007-12" db="EMBL/GenBank/DDBJ databases">
        <title>Brucella suis ATCC 23445 whole genome shotgun sequencing project.</title>
        <authorList>
            <person name="Setubal J.C."/>
            <person name="Bowns C."/>
            <person name="Boyle S."/>
            <person name="Crasta O.R."/>
            <person name="Czar M.J."/>
            <person name="Dharmanolla C."/>
            <person name="Gillespie J.J."/>
            <person name="Kenyon R.W."/>
            <person name="Lu J."/>
            <person name="Mane S."/>
            <person name="Mohapatra S."/>
            <person name="Nagrani S."/>
            <person name="Purkayastha A."/>
            <person name="Rajasimha H.K."/>
            <person name="Shallom J.M."/>
            <person name="Shallom S."/>
            <person name="Shukla M."/>
            <person name="Snyder E.E."/>
            <person name="Sobral B.W."/>
            <person name="Wattam A.R."/>
            <person name="Will R."/>
            <person name="Williams K."/>
            <person name="Yoo H."/>
            <person name="Bruce D."/>
            <person name="Detter C."/>
            <person name="Munk C."/>
            <person name="Brettin T.S."/>
        </authorList>
    </citation>
    <scope>NUCLEOTIDE SEQUENCE [LARGE SCALE GENOMIC DNA]</scope>
    <source>
        <strain>ATCC 23445 / NCTC 10510</strain>
    </source>
</reference>
<proteinExistence type="inferred from homology"/>
<keyword id="KW-0963">Cytoplasm</keyword>
<keyword id="KW-0275">Fatty acid biosynthesis</keyword>
<keyword id="KW-0276">Fatty acid metabolism</keyword>
<keyword id="KW-0413">Isomerase</keyword>
<keyword id="KW-0444">Lipid biosynthesis</keyword>
<keyword id="KW-0443">Lipid metabolism</keyword>
<keyword id="KW-0456">Lyase</keyword>
<name>FABA_BRUSI</name>
<sequence length="172" mass="19086">MAEQKSSYGYEELLACGRGEMFGPGNAQLPLPPMLMIHRITEISETGGAFDKGYIRAEYDVRPDDWYFPCHFQGNPIMPGCLGLDGMWQLTGFFLGWLGEPGRGMALSTGEVKFKGMVRPHTKLLEYGIDFKRVMRGRLVLGTADGWLKADGELIYQATDLRVGLSKEGSAQ</sequence>
<evidence type="ECO:0000255" key="1">
    <source>
        <dbReference type="HAMAP-Rule" id="MF_00405"/>
    </source>
</evidence>
<accession>B0CK19</accession>
<feature type="chain" id="PRO_1000080425" description="3-hydroxydecanoyl-[acyl-carrier-protein] dehydratase">
    <location>
        <begin position="1"/>
        <end position="172"/>
    </location>
</feature>
<feature type="active site" evidence="1">
    <location>
        <position position="71"/>
    </location>
</feature>
<protein>
    <recommendedName>
        <fullName evidence="1">3-hydroxydecanoyl-[acyl-carrier-protein] dehydratase</fullName>
        <ecNumber evidence="1">4.2.1.59</ecNumber>
    </recommendedName>
    <alternativeName>
        <fullName evidence="1">3-hydroxyacyl-[acyl-carrier-protein] dehydratase FabA</fullName>
    </alternativeName>
    <alternativeName>
        <fullName evidence="1">Beta-hydroxydecanoyl thioester dehydrase</fullName>
    </alternativeName>
    <alternativeName>
        <fullName evidence="1">Trans-2-decenoyl-[acyl-carrier-protein] isomerase</fullName>
        <ecNumber evidence="1">5.3.3.14</ecNumber>
    </alternativeName>
</protein>
<gene>
    <name evidence="1" type="primary">fabA</name>
    <name type="ordered locus">BSUIS_A2010</name>
</gene>
<organism>
    <name type="scientific">Brucella suis (strain ATCC 23445 / NCTC 10510)</name>
    <dbReference type="NCBI Taxonomy" id="470137"/>
    <lineage>
        <taxon>Bacteria</taxon>
        <taxon>Pseudomonadati</taxon>
        <taxon>Pseudomonadota</taxon>
        <taxon>Alphaproteobacteria</taxon>
        <taxon>Hyphomicrobiales</taxon>
        <taxon>Brucellaceae</taxon>
        <taxon>Brucella/Ochrobactrum group</taxon>
        <taxon>Brucella</taxon>
    </lineage>
</organism>